<protein>
    <recommendedName>
        <fullName evidence="3">Aromatic amino acid aminotransferase</fullName>
        <shortName evidence="1">ArAT</shortName>
        <ecNumber evidence="1">2.6.1.57</ecNumber>
    </recommendedName>
    <alternativeName>
        <fullName evidence="3">Phenylalanine aminotransferase</fullName>
    </alternativeName>
</protein>
<keyword id="KW-0032">Aminotransferase</keyword>
<keyword id="KW-0663">Pyridoxal phosphate</keyword>
<keyword id="KW-1185">Reference proteome</keyword>
<keyword id="KW-0808">Transferase</keyword>
<organism>
    <name type="scientific">Corynebacterium glutamicum (strain ATCC 13032 / DSM 20300 / JCM 1318 / BCRC 11384 / CCUG 27702 / LMG 3730 / NBRC 12168 / NCIMB 10025 / NRRL B-2784 / 534)</name>
    <dbReference type="NCBI Taxonomy" id="196627"/>
    <lineage>
        <taxon>Bacteria</taxon>
        <taxon>Bacillati</taxon>
        <taxon>Actinomycetota</taxon>
        <taxon>Actinomycetes</taxon>
        <taxon>Mycobacteriales</taxon>
        <taxon>Corynebacteriaceae</taxon>
        <taxon>Corynebacterium</taxon>
    </lineage>
</organism>
<feature type="chain" id="PRO_0000153512" description="Aromatic amino acid aminotransferase">
    <location>
        <begin position="1"/>
        <end position="341"/>
    </location>
</feature>
<feature type="modified residue" description="N6-(pyridoxal phosphate)lysine" evidence="1">
    <location>
        <position position="213"/>
    </location>
</feature>
<sequence length="341" mass="36450">MIRADLATIPTYVPGRRLVDATKLSSNEVSFSPLPAAVDAVTEATWGANRYPDMGAVELREALAEHLEVEFDQVTVGCGSSALCQQLVQATCAQGDEVIFPWRSFEAYPIFAQVAGATPVAIPLTADQNHDLDAMAAAITDKTRLIFICNPNNPSGTTITQAQFDNFMEKVPNDVVVGLDEAYFEFNRADDTPVATEEIHRHDNVIGLRTFSKAYGLAGLRVGYAFGNAEIIAAMNKVAIPFAVNSAAQAAALASLNSADELMERVEETVEKRDAVVSALGAAPTQANFVWLPGEGAAELAAKLAEHGIVIRAFPEGARISVTNAEETDKLLRAWEAINAG</sequence>
<name>PATR_CORGL</name>
<proteinExistence type="inferred from homology"/>
<reference key="1">
    <citation type="journal article" date="2003" name="J. Biotechnol.">
        <title>Genome-based analysis of biosynthetic aminotransferase genes of Corynebacterium glutamicum.</title>
        <authorList>
            <person name="McHardy A.C."/>
            <person name="Tauch A."/>
            <person name="Rueckert C."/>
            <person name="Puehler A."/>
            <person name="Kalinowski J."/>
        </authorList>
    </citation>
    <scope>NUCLEOTIDE SEQUENCE [GENOMIC DNA]</scope>
    <scope>PROBABLE FUNCTION</scope>
    <scope>DISRUPTION PHENOTYPE</scope>
    <source>
        <strain>ATCC 13032 / DSM 20300 / JCM 1318 / BCRC 11384 / CCUG 27702 / LMG 3730 / NBRC 12168 / NCIMB 10025 / NRRL B-2784 / 534</strain>
    </source>
</reference>
<reference key="2">
    <citation type="journal article" date="2003" name="Appl. Microbiol. Biotechnol.">
        <title>The Corynebacterium glutamicum genome: features and impacts on biotechnological processes.</title>
        <authorList>
            <person name="Ikeda M."/>
            <person name="Nakagawa S."/>
        </authorList>
    </citation>
    <scope>NUCLEOTIDE SEQUENCE [LARGE SCALE GENOMIC DNA]</scope>
    <source>
        <strain>ATCC 13032 / DSM 20300 / JCM 1318 / BCRC 11384 / CCUG 27702 / LMG 3730 / NBRC 12168 / NCIMB 10025 / NRRL B-2784 / 534</strain>
    </source>
</reference>
<reference key="3">
    <citation type="journal article" date="2003" name="J. Biotechnol.">
        <title>The complete Corynebacterium glutamicum ATCC 13032 genome sequence and its impact on the production of L-aspartate-derived amino acids and vitamins.</title>
        <authorList>
            <person name="Kalinowski J."/>
            <person name="Bathe B."/>
            <person name="Bartels D."/>
            <person name="Bischoff N."/>
            <person name="Bott M."/>
            <person name="Burkovski A."/>
            <person name="Dusch N."/>
            <person name="Eggeling L."/>
            <person name="Eikmanns B.J."/>
            <person name="Gaigalat L."/>
            <person name="Goesmann A."/>
            <person name="Hartmann M."/>
            <person name="Huthmacher K."/>
            <person name="Kraemer R."/>
            <person name="Linke B."/>
            <person name="McHardy A.C."/>
            <person name="Meyer F."/>
            <person name="Moeckel B."/>
            <person name="Pfefferle W."/>
            <person name="Puehler A."/>
            <person name="Rey D.A."/>
            <person name="Rueckert C."/>
            <person name="Rupp O."/>
            <person name="Sahm H."/>
            <person name="Wendisch V.F."/>
            <person name="Wiegraebe I."/>
            <person name="Tauch A."/>
        </authorList>
    </citation>
    <scope>NUCLEOTIDE SEQUENCE [LARGE SCALE GENOMIC DNA]</scope>
    <source>
        <strain>ATCC 13032 / DSM 20300 / JCM 1318 / BCRC 11384 / CCUG 27702 / LMG 3730 / NBRC 12168 / NCIMB 10025 / NRRL B-2784 / 534</strain>
    </source>
</reference>
<evidence type="ECO:0000255" key="1">
    <source>
        <dbReference type="HAMAP-Rule" id="MF_01513"/>
    </source>
</evidence>
<evidence type="ECO:0000269" key="2">
    <source>
    </source>
</evidence>
<evidence type="ECO:0000303" key="3">
    <source>
    </source>
</evidence>
<evidence type="ECO:0000305" key="4"/>
<gene>
    <name evidence="3" type="primary">pat</name>
    <name type="ordered locus">Cgl0218</name>
    <name type="ordered locus">cg0267</name>
</gene>
<comment type="function">
    <text evidence="1 2">Aminotransferase that catalyzes the conversion of aromatic amino acids and 2-oxoglutarate into corresponding aromatic oxo acids and L-glutamate (By similarity). May catalyze the transamination reaction in phenylalanine biosynthesis (PubMed:12948641).</text>
</comment>
<comment type="catalytic activity">
    <reaction evidence="1">
        <text>an aromatic L-alpha-amino acid + 2-oxoglutarate = an aromatic oxo-acid + L-glutamate</text>
        <dbReference type="Rhea" id="RHEA:17533"/>
        <dbReference type="ChEBI" id="CHEBI:16810"/>
        <dbReference type="ChEBI" id="CHEBI:29985"/>
        <dbReference type="ChEBI" id="CHEBI:73309"/>
        <dbReference type="ChEBI" id="CHEBI:84824"/>
        <dbReference type="EC" id="2.6.1.57"/>
    </reaction>
</comment>
<comment type="cofactor">
    <cofactor evidence="1">
        <name>pyridoxal 5'-phosphate</name>
        <dbReference type="ChEBI" id="CHEBI:597326"/>
    </cofactor>
</comment>
<comment type="subunit">
    <text evidence="1">Homodimer.</text>
</comment>
<comment type="disruption phenotype">
    <text evidence="2">The absence of this gene and the ilvE gene results in an auxotrophic requirement for phenylalanine when the double mutant is grown on minimal medium.</text>
</comment>
<comment type="similarity">
    <text evidence="4">Belongs to the class-II pyridoxal-phosphate-dependent aminotransferase family.</text>
</comment>
<accession>Q8NTT4</accession>
<dbReference type="EC" id="2.6.1.57" evidence="1"/>
<dbReference type="EMBL" id="AY238319">
    <property type="protein sequence ID" value="AAO92310.1"/>
    <property type="molecule type" value="Genomic_DNA"/>
</dbReference>
<dbReference type="EMBL" id="BA000036">
    <property type="protein sequence ID" value="BAB97611.1"/>
    <property type="molecule type" value="Genomic_DNA"/>
</dbReference>
<dbReference type="EMBL" id="BX927148">
    <property type="protein sequence ID" value="CAF18789.1"/>
    <property type="molecule type" value="Genomic_DNA"/>
</dbReference>
<dbReference type="RefSeq" id="NP_599471.2">
    <property type="nucleotide sequence ID" value="NC_003450.3"/>
</dbReference>
<dbReference type="SMR" id="Q8NTT4"/>
<dbReference type="STRING" id="196627.cg0267"/>
<dbReference type="DNASU" id="1021282"/>
<dbReference type="KEGG" id="cgb:cg0267"/>
<dbReference type="KEGG" id="cgl:Cgl0218"/>
<dbReference type="PATRIC" id="fig|196627.13.peg.222"/>
<dbReference type="eggNOG" id="COG0079">
    <property type="taxonomic scope" value="Bacteria"/>
</dbReference>
<dbReference type="HOGENOM" id="CLU_017584_3_3_11"/>
<dbReference type="OrthoDB" id="9809616at2"/>
<dbReference type="BioCyc" id="CORYNE:G18NG-9768-MONOMER"/>
<dbReference type="Proteomes" id="UP000000582">
    <property type="component" value="Chromosome"/>
</dbReference>
<dbReference type="Proteomes" id="UP000001009">
    <property type="component" value="Chromosome"/>
</dbReference>
<dbReference type="GO" id="GO:0008793">
    <property type="term" value="F:aromatic-amino-acid transaminase activity"/>
    <property type="evidence" value="ECO:0007669"/>
    <property type="project" value="UniProtKB-UniRule"/>
</dbReference>
<dbReference type="GO" id="GO:0004400">
    <property type="term" value="F:histidinol-phosphate transaminase activity"/>
    <property type="evidence" value="ECO:0007669"/>
    <property type="project" value="InterPro"/>
</dbReference>
<dbReference type="GO" id="GO:0030170">
    <property type="term" value="F:pyridoxal phosphate binding"/>
    <property type="evidence" value="ECO:0007669"/>
    <property type="project" value="UniProtKB-UniRule"/>
</dbReference>
<dbReference type="GO" id="GO:0000105">
    <property type="term" value="P:L-histidine biosynthetic process"/>
    <property type="evidence" value="ECO:0007669"/>
    <property type="project" value="InterPro"/>
</dbReference>
<dbReference type="CDD" id="cd00609">
    <property type="entry name" value="AAT_like"/>
    <property type="match status" value="1"/>
</dbReference>
<dbReference type="Gene3D" id="3.90.1150.10">
    <property type="entry name" value="Aspartate Aminotransferase, domain 1"/>
    <property type="match status" value="1"/>
</dbReference>
<dbReference type="Gene3D" id="3.40.640.10">
    <property type="entry name" value="Type I PLP-dependent aspartate aminotransferase-like (Major domain)"/>
    <property type="match status" value="1"/>
</dbReference>
<dbReference type="HAMAP" id="MF_01023">
    <property type="entry name" value="HisC_aminotrans_2"/>
    <property type="match status" value="1"/>
</dbReference>
<dbReference type="HAMAP" id="MF_01513">
    <property type="entry name" value="Phe_aminotrans_2"/>
    <property type="match status" value="1"/>
</dbReference>
<dbReference type="InterPro" id="IPR001917">
    <property type="entry name" value="Aminotrans_II_pyridoxalP_BS"/>
</dbReference>
<dbReference type="InterPro" id="IPR004839">
    <property type="entry name" value="Aminotransferase_I/II_large"/>
</dbReference>
<dbReference type="InterPro" id="IPR024892">
    <property type="entry name" value="ArAT"/>
</dbReference>
<dbReference type="InterPro" id="IPR005861">
    <property type="entry name" value="HisP_aminotrans"/>
</dbReference>
<dbReference type="InterPro" id="IPR050106">
    <property type="entry name" value="HistidinolP_aminotransfase"/>
</dbReference>
<dbReference type="InterPro" id="IPR015424">
    <property type="entry name" value="PyrdxlP-dep_Trfase"/>
</dbReference>
<dbReference type="InterPro" id="IPR015421">
    <property type="entry name" value="PyrdxlP-dep_Trfase_major"/>
</dbReference>
<dbReference type="InterPro" id="IPR015422">
    <property type="entry name" value="PyrdxlP-dep_Trfase_small"/>
</dbReference>
<dbReference type="NCBIfam" id="TIGR01141">
    <property type="entry name" value="hisC"/>
    <property type="match status" value="1"/>
</dbReference>
<dbReference type="NCBIfam" id="NF002878">
    <property type="entry name" value="PRK03321.1"/>
    <property type="match status" value="1"/>
</dbReference>
<dbReference type="PANTHER" id="PTHR43643:SF3">
    <property type="entry name" value="HISTIDINOL-PHOSPHATE AMINOTRANSFERASE"/>
    <property type="match status" value="1"/>
</dbReference>
<dbReference type="PANTHER" id="PTHR43643">
    <property type="entry name" value="HISTIDINOL-PHOSPHATE AMINOTRANSFERASE 2"/>
    <property type="match status" value="1"/>
</dbReference>
<dbReference type="Pfam" id="PF00155">
    <property type="entry name" value="Aminotran_1_2"/>
    <property type="match status" value="1"/>
</dbReference>
<dbReference type="SUPFAM" id="SSF53383">
    <property type="entry name" value="PLP-dependent transferases"/>
    <property type="match status" value="1"/>
</dbReference>
<dbReference type="PROSITE" id="PS00599">
    <property type="entry name" value="AA_TRANSFER_CLASS_2"/>
    <property type="match status" value="1"/>
</dbReference>